<sequence>MTESNRLRIAIQKSGRLSTDSQQLLKSCGVKFSINEQRLIAHADNMPIDLLRVRDDDIPGLVMDGVVDMGIIGENVLEEEQIERQTLNKPADCLKLRQLDFGSCRLSLAVPTEFSYADASSLEGLRIATSYPNLLRRFMQQKGITYRDCMLKGSVEVAPRAGLADGICDLVSTGATLEANGLYETEVIYRSMACIIQSTQTQTPTKQALIDKILSRVNGVIRARESKYILLHAPTETLDQIVALLPGAENPTVLPLNDDTNRVAIHAVSTEDLFWDTMEQLTALGASSILVMPIEKMMG</sequence>
<evidence type="ECO:0000255" key="1">
    <source>
        <dbReference type="HAMAP-Rule" id="MF_00079"/>
    </source>
</evidence>
<comment type="function">
    <text evidence="1">Catalyzes the condensation of ATP and 5-phosphoribose 1-diphosphate to form N'-(5'-phosphoribosyl)-ATP (PR-ATP). Has a crucial role in the pathway because the rate of histidine biosynthesis seems to be controlled primarily by regulation of HisG enzymatic activity.</text>
</comment>
<comment type="catalytic activity">
    <reaction evidence="1">
        <text>1-(5-phospho-beta-D-ribosyl)-ATP + diphosphate = 5-phospho-alpha-D-ribose 1-diphosphate + ATP</text>
        <dbReference type="Rhea" id="RHEA:18473"/>
        <dbReference type="ChEBI" id="CHEBI:30616"/>
        <dbReference type="ChEBI" id="CHEBI:33019"/>
        <dbReference type="ChEBI" id="CHEBI:58017"/>
        <dbReference type="ChEBI" id="CHEBI:73183"/>
        <dbReference type="EC" id="2.4.2.17"/>
    </reaction>
</comment>
<comment type="cofactor">
    <cofactor evidence="1">
        <name>Mg(2+)</name>
        <dbReference type="ChEBI" id="CHEBI:18420"/>
    </cofactor>
</comment>
<comment type="activity regulation">
    <text evidence="1">Feedback inhibited by histidine.</text>
</comment>
<comment type="pathway">
    <text evidence="1">Amino-acid biosynthesis; L-histidine biosynthesis; L-histidine from 5-phospho-alpha-D-ribose 1-diphosphate: step 1/9.</text>
</comment>
<comment type="subcellular location">
    <subcellularLocation>
        <location evidence="1">Cytoplasm</location>
    </subcellularLocation>
</comment>
<comment type="similarity">
    <text evidence="1">Belongs to the ATP phosphoribosyltransferase family. Long subfamily.</text>
</comment>
<keyword id="KW-0028">Amino-acid biosynthesis</keyword>
<keyword id="KW-0067">ATP-binding</keyword>
<keyword id="KW-0963">Cytoplasm</keyword>
<keyword id="KW-0328">Glycosyltransferase</keyword>
<keyword id="KW-0368">Histidine biosynthesis</keyword>
<keyword id="KW-0460">Magnesium</keyword>
<keyword id="KW-0479">Metal-binding</keyword>
<keyword id="KW-0547">Nucleotide-binding</keyword>
<keyword id="KW-0808">Transferase</keyword>
<organism>
    <name type="scientific">Shewanella baltica (strain OS185)</name>
    <dbReference type="NCBI Taxonomy" id="402882"/>
    <lineage>
        <taxon>Bacteria</taxon>
        <taxon>Pseudomonadati</taxon>
        <taxon>Pseudomonadota</taxon>
        <taxon>Gammaproteobacteria</taxon>
        <taxon>Alteromonadales</taxon>
        <taxon>Shewanellaceae</taxon>
        <taxon>Shewanella</taxon>
    </lineage>
</organism>
<accession>A6WP16</accession>
<proteinExistence type="inferred from homology"/>
<reference key="1">
    <citation type="submission" date="2007-07" db="EMBL/GenBank/DDBJ databases">
        <title>Complete sequence of chromosome of Shewanella baltica OS185.</title>
        <authorList>
            <consortium name="US DOE Joint Genome Institute"/>
            <person name="Copeland A."/>
            <person name="Lucas S."/>
            <person name="Lapidus A."/>
            <person name="Barry K."/>
            <person name="Glavina del Rio T."/>
            <person name="Dalin E."/>
            <person name="Tice H."/>
            <person name="Pitluck S."/>
            <person name="Sims D."/>
            <person name="Brettin T."/>
            <person name="Bruce D."/>
            <person name="Detter J.C."/>
            <person name="Han C."/>
            <person name="Schmutz J."/>
            <person name="Larimer F."/>
            <person name="Land M."/>
            <person name="Hauser L."/>
            <person name="Kyrpides N."/>
            <person name="Mikhailova N."/>
            <person name="Brettar I."/>
            <person name="Rodrigues J."/>
            <person name="Konstantinidis K."/>
            <person name="Tiedje J."/>
            <person name="Richardson P."/>
        </authorList>
    </citation>
    <scope>NUCLEOTIDE SEQUENCE [LARGE SCALE GENOMIC DNA]</scope>
    <source>
        <strain>OS185</strain>
    </source>
</reference>
<feature type="chain" id="PRO_1000004500" description="ATP phosphoribosyltransferase">
    <location>
        <begin position="1"/>
        <end position="299"/>
    </location>
</feature>
<gene>
    <name evidence="1" type="primary">hisG</name>
    <name type="ordered locus">Shew185_2418</name>
</gene>
<name>HIS1_SHEB8</name>
<protein>
    <recommendedName>
        <fullName evidence="1">ATP phosphoribosyltransferase</fullName>
        <shortName evidence="1">ATP-PRT</shortName>
        <shortName evidence="1">ATP-PRTase</shortName>
        <ecNumber evidence="1">2.4.2.17</ecNumber>
    </recommendedName>
</protein>
<dbReference type="EC" id="2.4.2.17" evidence="1"/>
<dbReference type="EMBL" id="CP000753">
    <property type="protein sequence ID" value="ABS08555.1"/>
    <property type="molecule type" value="Genomic_DNA"/>
</dbReference>
<dbReference type="RefSeq" id="WP_006086295.1">
    <property type="nucleotide sequence ID" value="NC_009665.1"/>
</dbReference>
<dbReference type="SMR" id="A6WP16"/>
<dbReference type="GeneID" id="11774808"/>
<dbReference type="KEGG" id="sbm:Shew185_2418"/>
<dbReference type="HOGENOM" id="CLU_038115_1_0_6"/>
<dbReference type="UniPathway" id="UPA00031">
    <property type="reaction ID" value="UER00006"/>
</dbReference>
<dbReference type="GO" id="GO:0005737">
    <property type="term" value="C:cytoplasm"/>
    <property type="evidence" value="ECO:0007669"/>
    <property type="project" value="UniProtKB-SubCell"/>
</dbReference>
<dbReference type="GO" id="GO:0005524">
    <property type="term" value="F:ATP binding"/>
    <property type="evidence" value="ECO:0007669"/>
    <property type="project" value="UniProtKB-KW"/>
</dbReference>
<dbReference type="GO" id="GO:0003879">
    <property type="term" value="F:ATP phosphoribosyltransferase activity"/>
    <property type="evidence" value="ECO:0007669"/>
    <property type="project" value="UniProtKB-UniRule"/>
</dbReference>
<dbReference type="GO" id="GO:0000287">
    <property type="term" value="F:magnesium ion binding"/>
    <property type="evidence" value="ECO:0007669"/>
    <property type="project" value="UniProtKB-UniRule"/>
</dbReference>
<dbReference type="GO" id="GO:0000105">
    <property type="term" value="P:L-histidine biosynthetic process"/>
    <property type="evidence" value="ECO:0007669"/>
    <property type="project" value="UniProtKB-UniRule"/>
</dbReference>
<dbReference type="FunFam" id="3.30.70.120:FF:000002">
    <property type="entry name" value="ATP phosphoribosyltransferase"/>
    <property type="match status" value="1"/>
</dbReference>
<dbReference type="FunFam" id="3.40.190.10:FF:000008">
    <property type="entry name" value="ATP phosphoribosyltransferase"/>
    <property type="match status" value="1"/>
</dbReference>
<dbReference type="Gene3D" id="3.30.70.120">
    <property type="match status" value="1"/>
</dbReference>
<dbReference type="Gene3D" id="3.40.190.10">
    <property type="entry name" value="Periplasmic binding protein-like II"/>
    <property type="match status" value="2"/>
</dbReference>
<dbReference type="HAMAP" id="MF_00079">
    <property type="entry name" value="HisG_Long"/>
    <property type="match status" value="1"/>
</dbReference>
<dbReference type="InterPro" id="IPR020621">
    <property type="entry name" value="ATP-PRT_HisG_long"/>
</dbReference>
<dbReference type="InterPro" id="IPR013820">
    <property type="entry name" value="ATP_PRibTrfase_cat"/>
</dbReference>
<dbReference type="InterPro" id="IPR018198">
    <property type="entry name" value="ATP_PRibTrfase_CS"/>
</dbReference>
<dbReference type="InterPro" id="IPR001348">
    <property type="entry name" value="ATP_PRibTrfase_HisG"/>
</dbReference>
<dbReference type="InterPro" id="IPR013115">
    <property type="entry name" value="HisG_C"/>
</dbReference>
<dbReference type="InterPro" id="IPR011322">
    <property type="entry name" value="N-reg_PII-like_a/b"/>
</dbReference>
<dbReference type="InterPro" id="IPR015867">
    <property type="entry name" value="N-reg_PII/ATP_PRibTrfase_C"/>
</dbReference>
<dbReference type="NCBIfam" id="TIGR00070">
    <property type="entry name" value="hisG"/>
    <property type="match status" value="1"/>
</dbReference>
<dbReference type="NCBIfam" id="TIGR03455">
    <property type="entry name" value="HisG_C-term"/>
    <property type="match status" value="1"/>
</dbReference>
<dbReference type="PANTHER" id="PTHR21403:SF8">
    <property type="entry name" value="ATP PHOSPHORIBOSYLTRANSFERASE"/>
    <property type="match status" value="1"/>
</dbReference>
<dbReference type="PANTHER" id="PTHR21403">
    <property type="entry name" value="ATP PHOSPHORIBOSYLTRANSFERASE ATP-PRTASE"/>
    <property type="match status" value="1"/>
</dbReference>
<dbReference type="Pfam" id="PF01634">
    <property type="entry name" value="HisG"/>
    <property type="match status" value="1"/>
</dbReference>
<dbReference type="Pfam" id="PF08029">
    <property type="entry name" value="HisG_C"/>
    <property type="match status" value="1"/>
</dbReference>
<dbReference type="SUPFAM" id="SSF54913">
    <property type="entry name" value="GlnB-like"/>
    <property type="match status" value="1"/>
</dbReference>
<dbReference type="SUPFAM" id="SSF53850">
    <property type="entry name" value="Periplasmic binding protein-like II"/>
    <property type="match status" value="1"/>
</dbReference>
<dbReference type="PROSITE" id="PS01316">
    <property type="entry name" value="ATP_P_PHORIBOSYLTR"/>
    <property type="match status" value="1"/>
</dbReference>